<protein>
    <recommendedName>
        <fullName evidence="1">Peptidase T</fullName>
        <ecNumber evidence="1">3.4.11.4</ecNumber>
    </recommendedName>
    <alternativeName>
        <fullName evidence="1">Aminotripeptidase</fullName>
        <shortName evidence="1">Tripeptidase</shortName>
    </alternativeName>
    <alternativeName>
        <fullName evidence="1">Tripeptide aminopeptidase</fullName>
    </alternativeName>
</protein>
<keyword id="KW-0031">Aminopeptidase</keyword>
<keyword id="KW-0963">Cytoplasm</keyword>
<keyword id="KW-0378">Hydrolase</keyword>
<keyword id="KW-0479">Metal-binding</keyword>
<keyword id="KW-0482">Metalloprotease</keyword>
<keyword id="KW-0645">Protease</keyword>
<keyword id="KW-0862">Zinc</keyword>
<sequence length="412" mass="46009">MISQIDKTELLERFLHYVSFHTQSKPHAKHSPSSVGQMKLAMQLQKELIQLGLENVEVSKYAVVTAFLPANDPNLTKTIGLVAHLDTSPQCSGKNVRPEVIEEYRGGDIALGIGEEFISPVYYSFMQKLVGQTLIVTDGTTLLGADNKAGIAEIMTALSILQKENIPHCNIRVAFTPDEEIGLGIHYFPMEKFSCDWAYTIDGGEVGELEYENFNAATAKVRFFGRNIHTGYAKGKMLNALTLACEFQQVFPVDEVPEKTDGKVGFYHLEDFSGDIEQVELTYLIRDFDEQNFAQRKAFIKNQVEKFNAKKGLKKPIELEIQDSYQNMYDVVKNVPQSIELADRAMKAVGIKPNHKPIRGGTDGAFLASKGLACPNIFTGGYNFHSKHELVSLQGMENTVQVIIEMLKCKDL</sequence>
<evidence type="ECO:0000255" key="1">
    <source>
        <dbReference type="HAMAP-Rule" id="MF_00550"/>
    </source>
</evidence>
<gene>
    <name evidence="1" type="primary">pepT</name>
    <name type="ordered locus">CGSHiGG_00385</name>
</gene>
<accession>A5UEI5</accession>
<comment type="function">
    <text evidence="1">Cleaves the N-terminal amino acid of tripeptides.</text>
</comment>
<comment type="catalytic activity">
    <reaction evidence="1">
        <text>Release of the N-terminal residue from a tripeptide.</text>
        <dbReference type="EC" id="3.4.11.4"/>
    </reaction>
</comment>
<comment type="cofactor">
    <cofactor evidence="1">
        <name>Zn(2+)</name>
        <dbReference type="ChEBI" id="CHEBI:29105"/>
    </cofactor>
    <text evidence="1">Binds 2 Zn(2+) ions per subunit.</text>
</comment>
<comment type="subcellular location">
    <subcellularLocation>
        <location evidence="1">Cytoplasm</location>
    </subcellularLocation>
</comment>
<comment type="similarity">
    <text evidence="1">Belongs to the peptidase M20B family.</text>
</comment>
<organism>
    <name type="scientific">Haemophilus influenzae (strain PittGG)</name>
    <dbReference type="NCBI Taxonomy" id="374931"/>
    <lineage>
        <taxon>Bacteria</taxon>
        <taxon>Pseudomonadati</taxon>
        <taxon>Pseudomonadota</taxon>
        <taxon>Gammaproteobacteria</taxon>
        <taxon>Pasteurellales</taxon>
        <taxon>Pasteurellaceae</taxon>
        <taxon>Haemophilus</taxon>
    </lineage>
</organism>
<proteinExistence type="inferred from homology"/>
<name>PEPT_HAEIG</name>
<dbReference type="EC" id="3.4.11.4" evidence="1"/>
<dbReference type="EMBL" id="CP000672">
    <property type="protein sequence ID" value="ABQ99190.1"/>
    <property type="molecule type" value="Genomic_DNA"/>
</dbReference>
<dbReference type="SMR" id="A5UEI5"/>
<dbReference type="MEROPS" id="M20.003"/>
<dbReference type="KEGG" id="hiq:CGSHiGG_00385"/>
<dbReference type="HOGENOM" id="CLU_053676_0_0_6"/>
<dbReference type="Proteomes" id="UP000001990">
    <property type="component" value="Chromosome"/>
</dbReference>
<dbReference type="GO" id="GO:0005829">
    <property type="term" value="C:cytosol"/>
    <property type="evidence" value="ECO:0007669"/>
    <property type="project" value="TreeGrafter"/>
</dbReference>
<dbReference type="GO" id="GO:0008237">
    <property type="term" value="F:metallopeptidase activity"/>
    <property type="evidence" value="ECO:0007669"/>
    <property type="project" value="UniProtKB-KW"/>
</dbReference>
<dbReference type="GO" id="GO:0045148">
    <property type="term" value="F:tripeptide aminopeptidase activity"/>
    <property type="evidence" value="ECO:0007669"/>
    <property type="project" value="UniProtKB-UniRule"/>
</dbReference>
<dbReference type="GO" id="GO:0008270">
    <property type="term" value="F:zinc ion binding"/>
    <property type="evidence" value="ECO:0007669"/>
    <property type="project" value="UniProtKB-UniRule"/>
</dbReference>
<dbReference type="GO" id="GO:0043171">
    <property type="term" value="P:peptide catabolic process"/>
    <property type="evidence" value="ECO:0007669"/>
    <property type="project" value="UniProtKB-UniRule"/>
</dbReference>
<dbReference type="GO" id="GO:0006508">
    <property type="term" value="P:proteolysis"/>
    <property type="evidence" value="ECO:0007669"/>
    <property type="project" value="UniProtKB-UniRule"/>
</dbReference>
<dbReference type="CDD" id="cd03892">
    <property type="entry name" value="M20_peptT"/>
    <property type="match status" value="1"/>
</dbReference>
<dbReference type="FunFam" id="3.30.70.360:FF:000002">
    <property type="entry name" value="Peptidase T"/>
    <property type="match status" value="1"/>
</dbReference>
<dbReference type="Gene3D" id="3.30.70.360">
    <property type="match status" value="1"/>
</dbReference>
<dbReference type="Gene3D" id="3.40.630.10">
    <property type="entry name" value="Zn peptidases"/>
    <property type="match status" value="1"/>
</dbReference>
<dbReference type="HAMAP" id="MF_00550">
    <property type="entry name" value="Aminopeptidase_M20"/>
    <property type="match status" value="1"/>
</dbReference>
<dbReference type="InterPro" id="IPR001261">
    <property type="entry name" value="ArgE/DapE_CS"/>
</dbReference>
<dbReference type="InterPro" id="IPR036264">
    <property type="entry name" value="Bact_exopeptidase_dim_dom"/>
</dbReference>
<dbReference type="InterPro" id="IPR002933">
    <property type="entry name" value="Peptidase_M20"/>
</dbReference>
<dbReference type="InterPro" id="IPR011650">
    <property type="entry name" value="Peptidase_M20_dimer"/>
</dbReference>
<dbReference type="InterPro" id="IPR010161">
    <property type="entry name" value="Peptidase_M20B"/>
</dbReference>
<dbReference type="NCBIfam" id="TIGR01882">
    <property type="entry name" value="peptidase-T"/>
    <property type="match status" value="1"/>
</dbReference>
<dbReference type="NCBIfam" id="NF003976">
    <property type="entry name" value="PRK05469.1"/>
    <property type="match status" value="1"/>
</dbReference>
<dbReference type="NCBIfam" id="NF009920">
    <property type="entry name" value="PRK13381.1"/>
    <property type="match status" value="1"/>
</dbReference>
<dbReference type="PANTHER" id="PTHR42994">
    <property type="entry name" value="PEPTIDASE T"/>
    <property type="match status" value="1"/>
</dbReference>
<dbReference type="PANTHER" id="PTHR42994:SF1">
    <property type="entry name" value="PEPTIDASE T"/>
    <property type="match status" value="1"/>
</dbReference>
<dbReference type="Pfam" id="PF07687">
    <property type="entry name" value="M20_dimer"/>
    <property type="match status" value="1"/>
</dbReference>
<dbReference type="Pfam" id="PF01546">
    <property type="entry name" value="Peptidase_M20"/>
    <property type="match status" value="1"/>
</dbReference>
<dbReference type="PIRSF" id="PIRSF037215">
    <property type="entry name" value="Peptidase_M20B"/>
    <property type="match status" value="1"/>
</dbReference>
<dbReference type="SUPFAM" id="SSF55031">
    <property type="entry name" value="Bacterial exopeptidase dimerisation domain"/>
    <property type="match status" value="1"/>
</dbReference>
<dbReference type="SUPFAM" id="SSF53187">
    <property type="entry name" value="Zn-dependent exopeptidases"/>
    <property type="match status" value="1"/>
</dbReference>
<dbReference type="PROSITE" id="PS00758">
    <property type="entry name" value="ARGE_DAPE_CPG2_1"/>
    <property type="match status" value="1"/>
</dbReference>
<dbReference type="PROSITE" id="PS00759">
    <property type="entry name" value="ARGE_DAPE_CPG2_2"/>
    <property type="match status" value="1"/>
</dbReference>
<reference key="1">
    <citation type="journal article" date="2007" name="Genome Biol.">
        <title>Characterization and modeling of the Haemophilus influenzae core and supragenomes based on the complete genomic sequences of Rd and 12 clinical nontypeable strains.</title>
        <authorList>
            <person name="Hogg J.S."/>
            <person name="Hu F.Z."/>
            <person name="Janto B."/>
            <person name="Boissy R."/>
            <person name="Hayes J."/>
            <person name="Keefe R."/>
            <person name="Post J.C."/>
            <person name="Ehrlich G.D."/>
        </authorList>
    </citation>
    <scope>NUCLEOTIDE SEQUENCE [LARGE SCALE GENOMIC DNA]</scope>
    <source>
        <strain>PittGG</strain>
    </source>
</reference>
<feature type="chain" id="PRO_1000017847" description="Peptidase T">
    <location>
        <begin position="1"/>
        <end position="412"/>
    </location>
</feature>
<feature type="active site" evidence="1">
    <location>
        <position position="86"/>
    </location>
</feature>
<feature type="active site" description="Proton acceptor" evidence="1">
    <location>
        <position position="179"/>
    </location>
</feature>
<feature type="binding site" evidence="1">
    <location>
        <position position="84"/>
    </location>
    <ligand>
        <name>Zn(2+)</name>
        <dbReference type="ChEBI" id="CHEBI:29105"/>
        <label>1</label>
    </ligand>
</feature>
<feature type="binding site" evidence="1">
    <location>
        <position position="146"/>
    </location>
    <ligand>
        <name>Zn(2+)</name>
        <dbReference type="ChEBI" id="CHEBI:29105"/>
        <label>1</label>
    </ligand>
</feature>
<feature type="binding site" evidence="1">
    <location>
        <position position="146"/>
    </location>
    <ligand>
        <name>Zn(2+)</name>
        <dbReference type="ChEBI" id="CHEBI:29105"/>
        <label>2</label>
    </ligand>
</feature>
<feature type="binding site" evidence="1">
    <location>
        <position position="180"/>
    </location>
    <ligand>
        <name>Zn(2+)</name>
        <dbReference type="ChEBI" id="CHEBI:29105"/>
        <label>2</label>
    </ligand>
</feature>
<feature type="binding site" evidence="1">
    <location>
        <position position="202"/>
    </location>
    <ligand>
        <name>Zn(2+)</name>
        <dbReference type="ChEBI" id="CHEBI:29105"/>
        <label>1</label>
    </ligand>
</feature>
<feature type="binding site" evidence="1">
    <location>
        <position position="385"/>
    </location>
    <ligand>
        <name>Zn(2+)</name>
        <dbReference type="ChEBI" id="CHEBI:29105"/>
        <label>2</label>
    </ligand>
</feature>